<sequence length="9" mass="1077">ARSDNFVRL</sequence>
<name>FAR7_AUSRA</name>
<dbReference type="GO" id="GO:0005576">
    <property type="term" value="C:extracellular region"/>
    <property type="evidence" value="ECO:0007669"/>
    <property type="project" value="UniProtKB-SubCell"/>
</dbReference>
<dbReference type="GO" id="GO:0007218">
    <property type="term" value="P:neuropeptide signaling pathway"/>
    <property type="evidence" value="ECO:0007669"/>
    <property type="project" value="UniProtKB-KW"/>
</dbReference>
<comment type="function">
    <text evidence="1">FMRFamides and FMRFamide-like peptides are neuropeptides.</text>
</comment>
<comment type="subcellular location">
    <subcellularLocation>
        <location evidence="6">Secreted</location>
    </subcellularLocation>
</comment>
<comment type="similarity">
    <text evidence="2">Belongs to the FARP (FMRF amide related peptide) family.</text>
</comment>
<keyword id="KW-0027">Amidation</keyword>
<keyword id="KW-0903">Direct protein sequencing</keyword>
<keyword id="KW-0527">Neuropeptide</keyword>
<keyword id="KW-0964">Secreted</keyword>
<organism>
    <name type="scientific">Austrophasma rawsonvillense</name>
    <name type="common">Gladiator</name>
    <name type="synonym">Heel-walker</name>
    <dbReference type="NCBI Taxonomy" id="253137"/>
    <lineage>
        <taxon>Eukaryota</taxon>
        <taxon>Metazoa</taxon>
        <taxon>Ecdysozoa</taxon>
        <taxon>Arthropoda</taxon>
        <taxon>Hexapoda</taxon>
        <taxon>Insecta</taxon>
        <taxon>Pterygota</taxon>
        <taxon>Neoptera</taxon>
        <taxon>Polyneoptera</taxon>
        <taxon>Mantophasmatodea</taxon>
        <taxon>Austrophasmatidae</taxon>
        <taxon>Austrophasma</taxon>
    </lineage>
</organism>
<reference evidence="5" key="1">
    <citation type="journal article" date="2012" name="Syst. Biol.">
        <title>Peptidomics-based phylogeny and biogeography of Mantophasmatodea (Hexapoda).</title>
        <authorList>
            <person name="Predel R."/>
            <person name="Neupert S."/>
            <person name="Huetteroth W."/>
            <person name="Kahnt J."/>
            <person name="Waidelich D."/>
            <person name="Roth S."/>
        </authorList>
    </citation>
    <scope>PROTEIN SEQUENCE</scope>
    <scope>AMIDATION AT LEU-9</scope>
    <source>
        <tissue evidence="3">Thoracic perisympathetic organs</tissue>
    </source>
</reference>
<proteinExistence type="evidence at protein level"/>
<evidence type="ECO:0000250" key="1">
    <source>
        <dbReference type="UniProtKB" id="P34405"/>
    </source>
</evidence>
<evidence type="ECO:0000255" key="2"/>
<evidence type="ECO:0000269" key="3">
    <source>
    </source>
</evidence>
<evidence type="ECO:0000303" key="4">
    <source>
    </source>
</evidence>
<evidence type="ECO:0000305" key="5"/>
<evidence type="ECO:0000305" key="6">
    <source>
    </source>
</evidence>
<feature type="peptide" id="PRO_0000421521" description="Extended FMRFamide-7" evidence="3">
    <location>
        <begin position="1"/>
        <end position="9"/>
    </location>
</feature>
<feature type="modified residue" description="Leucine amide" evidence="3">
    <location>
        <position position="9"/>
    </location>
</feature>
<feature type="unsure residue" description="L or I" evidence="3">
    <location>
        <position position="9"/>
    </location>
</feature>
<accession>B3A0A5</accession>
<protein>
    <recommendedName>
        <fullName evidence="4">Extended FMRFamide-7</fullName>
        <shortName evidence="4">FMRFa-7</shortName>
    </recommendedName>
</protein>